<keyword id="KW-0963">Cytoplasm</keyword>
<keyword id="KW-0396">Initiation factor</keyword>
<keyword id="KW-0648">Protein biosynthesis</keyword>
<keyword id="KW-0694">RNA-binding</keyword>
<keyword id="KW-0699">rRNA-binding</keyword>
<protein>
    <recommendedName>
        <fullName evidence="1">Translation initiation factor IF-1</fullName>
    </recommendedName>
</protein>
<organism>
    <name type="scientific">Caldicellulosiruptor saccharolyticus (strain ATCC 43494 / DSM 8903 / Tp8T 6331)</name>
    <dbReference type="NCBI Taxonomy" id="351627"/>
    <lineage>
        <taxon>Bacteria</taxon>
        <taxon>Bacillati</taxon>
        <taxon>Bacillota</taxon>
        <taxon>Bacillota incertae sedis</taxon>
        <taxon>Caldicellulosiruptorales</taxon>
        <taxon>Caldicellulosiruptoraceae</taxon>
        <taxon>Caldicellulosiruptor</taxon>
    </lineage>
</organism>
<reference key="1">
    <citation type="submission" date="2007-04" db="EMBL/GenBank/DDBJ databases">
        <title>Genome sequence of the thermophilic hydrogen-producing bacterium Caldicellulosiruptor saccharolyticus DSM 8903.</title>
        <authorList>
            <person name="Copeland A."/>
            <person name="Lucas S."/>
            <person name="Lapidus A."/>
            <person name="Barry K."/>
            <person name="Detter J.C."/>
            <person name="Glavina del Rio T."/>
            <person name="Hammon N."/>
            <person name="Israni S."/>
            <person name="Dalin E."/>
            <person name="Tice H."/>
            <person name="Pitluck S."/>
            <person name="Kiss H."/>
            <person name="Brettin T."/>
            <person name="Bruce D."/>
            <person name="Han C."/>
            <person name="Schmutz J."/>
            <person name="Larimer F."/>
            <person name="Land M."/>
            <person name="Hauser L."/>
            <person name="Kyrpides N."/>
            <person name="Lykidis A."/>
            <person name="van de Werken H.J.G."/>
            <person name="Verhaart M.R.A."/>
            <person name="VanFossen A.L."/>
            <person name="Lewis D.L."/>
            <person name="Nichols J.D."/>
            <person name="Goorissen H.P."/>
            <person name="van Niel E.W.J."/>
            <person name="Stams F.J.M."/>
            <person name="Willquist K.U."/>
            <person name="Ward D.E."/>
            <person name="van der Oost J."/>
            <person name="Kelly R.M."/>
            <person name="Kengen S.M.W."/>
            <person name="Richardson P."/>
        </authorList>
    </citation>
    <scope>NUCLEOTIDE SEQUENCE [LARGE SCALE GENOMIC DNA]</scope>
    <source>
        <strain>ATCC 43494 / DSM 8903 / Tp8T 6331</strain>
    </source>
</reference>
<name>IF1_CALS8</name>
<feature type="chain" id="PRO_0000338789" description="Translation initiation factor IF-1">
    <location>
        <begin position="1"/>
        <end position="72"/>
    </location>
</feature>
<feature type="domain" description="S1-like" evidence="1">
    <location>
        <begin position="1"/>
        <end position="72"/>
    </location>
</feature>
<dbReference type="EMBL" id="CP000679">
    <property type="protein sequence ID" value="ABP67842.1"/>
    <property type="molecule type" value="Genomic_DNA"/>
</dbReference>
<dbReference type="RefSeq" id="WP_011917768.1">
    <property type="nucleotide sequence ID" value="NC_009437.1"/>
</dbReference>
<dbReference type="SMR" id="A4XLQ7"/>
<dbReference type="STRING" id="351627.Csac_2264"/>
<dbReference type="KEGG" id="csc:Csac_2264"/>
<dbReference type="eggNOG" id="COG0361">
    <property type="taxonomic scope" value="Bacteria"/>
</dbReference>
<dbReference type="HOGENOM" id="CLU_151267_1_0_9"/>
<dbReference type="OrthoDB" id="9803250at2"/>
<dbReference type="Proteomes" id="UP000000256">
    <property type="component" value="Chromosome"/>
</dbReference>
<dbReference type="GO" id="GO:0005829">
    <property type="term" value="C:cytosol"/>
    <property type="evidence" value="ECO:0007669"/>
    <property type="project" value="TreeGrafter"/>
</dbReference>
<dbReference type="GO" id="GO:0043022">
    <property type="term" value="F:ribosome binding"/>
    <property type="evidence" value="ECO:0007669"/>
    <property type="project" value="UniProtKB-UniRule"/>
</dbReference>
<dbReference type="GO" id="GO:0019843">
    <property type="term" value="F:rRNA binding"/>
    <property type="evidence" value="ECO:0007669"/>
    <property type="project" value="UniProtKB-UniRule"/>
</dbReference>
<dbReference type="GO" id="GO:0003743">
    <property type="term" value="F:translation initiation factor activity"/>
    <property type="evidence" value="ECO:0007669"/>
    <property type="project" value="UniProtKB-UniRule"/>
</dbReference>
<dbReference type="CDD" id="cd04451">
    <property type="entry name" value="S1_IF1"/>
    <property type="match status" value="1"/>
</dbReference>
<dbReference type="FunFam" id="2.40.50.140:FF:000002">
    <property type="entry name" value="Translation initiation factor IF-1"/>
    <property type="match status" value="1"/>
</dbReference>
<dbReference type="Gene3D" id="2.40.50.140">
    <property type="entry name" value="Nucleic acid-binding proteins"/>
    <property type="match status" value="1"/>
</dbReference>
<dbReference type="HAMAP" id="MF_00075">
    <property type="entry name" value="IF_1"/>
    <property type="match status" value="1"/>
</dbReference>
<dbReference type="InterPro" id="IPR012340">
    <property type="entry name" value="NA-bd_OB-fold"/>
</dbReference>
<dbReference type="InterPro" id="IPR006196">
    <property type="entry name" value="RNA-binding_domain_S1_IF1"/>
</dbReference>
<dbReference type="InterPro" id="IPR003029">
    <property type="entry name" value="S1_domain"/>
</dbReference>
<dbReference type="InterPro" id="IPR004368">
    <property type="entry name" value="TIF_IF1"/>
</dbReference>
<dbReference type="NCBIfam" id="TIGR00008">
    <property type="entry name" value="infA"/>
    <property type="match status" value="1"/>
</dbReference>
<dbReference type="PANTHER" id="PTHR33370">
    <property type="entry name" value="TRANSLATION INITIATION FACTOR IF-1, CHLOROPLASTIC"/>
    <property type="match status" value="1"/>
</dbReference>
<dbReference type="PANTHER" id="PTHR33370:SF1">
    <property type="entry name" value="TRANSLATION INITIATION FACTOR IF-1, CHLOROPLASTIC"/>
    <property type="match status" value="1"/>
</dbReference>
<dbReference type="Pfam" id="PF01176">
    <property type="entry name" value="eIF-1a"/>
    <property type="match status" value="1"/>
</dbReference>
<dbReference type="SMART" id="SM00316">
    <property type="entry name" value="S1"/>
    <property type="match status" value="1"/>
</dbReference>
<dbReference type="SUPFAM" id="SSF50249">
    <property type="entry name" value="Nucleic acid-binding proteins"/>
    <property type="match status" value="1"/>
</dbReference>
<dbReference type="PROSITE" id="PS50832">
    <property type="entry name" value="S1_IF1_TYPE"/>
    <property type="match status" value="1"/>
</dbReference>
<proteinExistence type="inferred from homology"/>
<comment type="function">
    <text evidence="1">One of the essential components for the initiation of protein synthesis. Stabilizes the binding of IF-2 and IF-3 on the 30S subunit to which N-formylmethionyl-tRNA(fMet) subsequently binds. Helps modulate mRNA selection, yielding the 30S pre-initiation complex (PIC). Upon addition of the 50S ribosomal subunit IF-1, IF-2 and IF-3 are released leaving the mature 70S translation initiation complex.</text>
</comment>
<comment type="subunit">
    <text evidence="1">Component of the 30S ribosomal translation pre-initiation complex which assembles on the 30S ribosome in the order IF-2 and IF-3, IF-1 and N-formylmethionyl-tRNA(fMet); mRNA recruitment can occur at any time during PIC assembly.</text>
</comment>
<comment type="subcellular location">
    <subcellularLocation>
        <location evidence="1">Cytoplasm</location>
    </subcellularLocation>
</comment>
<comment type="similarity">
    <text evidence="1">Belongs to the IF-1 family.</text>
</comment>
<gene>
    <name evidence="1" type="primary">infA</name>
    <name type="ordered locus">Csac_2264</name>
</gene>
<sequence length="72" mass="8187">MSKEDVIELEGTVIEALPNAMFQVQLDNGHKVLAHVSGKLRMNFIRILPGDRVVVQLSPYDLTRGRIVWRSK</sequence>
<evidence type="ECO:0000255" key="1">
    <source>
        <dbReference type="HAMAP-Rule" id="MF_00075"/>
    </source>
</evidence>
<accession>A4XLQ7</accession>